<comment type="function">
    <text evidence="1">Envelope glycoprotein necessary for proper maturation of gM and modulation of its membrane fusion activity. Also plays a critical role in virion morphogenesis.</text>
</comment>
<comment type="subunit">
    <text evidence="1">Interacts (via N-terminus) with gM (via N-terminus). The gM-gN heterodimer forms the gCII complex.</text>
</comment>
<comment type="subcellular location">
    <subcellularLocation>
        <location evidence="1">Virion membrane</location>
        <topology evidence="1">Single-pass type I membrane protein</topology>
    </subcellularLocation>
    <subcellularLocation>
        <location evidence="1">Host membrane</location>
        <topology evidence="1">Single-pass type I membrane protein</topology>
    </subcellularLocation>
    <subcellularLocation>
        <location evidence="1">Host Golgi apparatus</location>
        <location evidence="1">Host trans-Golgi network</location>
    </subcellularLocation>
    <text evidence="1">When coexpressed with gM, localizes in the host trans-Golgi network.</text>
</comment>
<comment type="similarity">
    <text evidence="1">Belongs to the herpesviridae glycoprotein N family.</text>
</comment>
<gene>
    <name evidence="1" type="primary">gN</name>
    <name type="ORF">BHRF1</name>
    <name type="ORF">U46</name>
</gene>
<feature type="signal peptide" evidence="1">
    <location>
        <begin position="1"/>
        <end position="26"/>
    </location>
</feature>
<feature type="chain" id="PRO_0000116215" description="Envelope glycoprotein N" evidence="1">
    <location>
        <begin position="27"/>
        <end position="84"/>
    </location>
</feature>
<feature type="topological domain" description="Virion surface" evidence="1">
    <location>
        <begin position="27"/>
        <end position="47"/>
    </location>
</feature>
<feature type="transmembrane region" description="Helical" evidence="1">
    <location>
        <begin position="48"/>
        <end position="68"/>
    </location>
</feature>
<feature type="topological domain" description="Intravirion" evidence="1">
    <location>
        <begin position="69"/>
        <end position="84"/>
    </location>
</feature>
<feature type="disulfide bond" description="Interchain (with gM)" evidence="1">
    <location>
        <position position="36"/>
    </location>
</feature>
<protein>
    <recommendedName>
        <fullName evidence="1">Envelope glycoprotein N</fullName>
    </recommendedName>
</protein>
<keyword id="KW-1015">Disulfide bond</keyword>
<keyword id="KW-1040">Host Golgi apparatus</keyword>
<keyword id="KW-1043">Host membrane</keyword>
<keyword id="KW-0472">Membrane</keyword>
<keyword id="KW-1185">Reference proteome</keyword>
<keyword id="KW-0732">Signal</keyword>
<keyword id="KW-0812">Transmembrane</keyword>
<keyword id="KW-1133">Transmembrane helix</keyword>
<keyword id="KW-0261">Viral envelope protein</keyword>
<keyword id="KW-0946">Virion</keyword>
<sequence>MSCKKSARQSLYVSLCLFYILVFAAATEVDFYSPECHSHTYEIVLNSFSSIWLLINLFLLLCSFAIFLKYWCYKTFASETVKGY</sequence>
<dbReference type="EMBL" id="X64320">
    <property type="protein sequence ID" value="CAA45601.1"/>
    <property type="molecule type" value="Genomic_DNA"/>
</dbReference>
<dbReference type="EMBL" id="X83413">
    <property type="protein sequence ID" value="CAA58380.1"/>
    <property type="molecule type" value="Genomic_DNA"/>
</dbReference>
<dbReference type="PIR" id="B56653">
    <property type="entry name" value="B56653"/>
</dbReference>
<dbReference type="RefSeq" id="NP_042939.1">
    <property type="nucleotide sequence ID" value="NC_001664.2"/>
</dbReference>
<dbReference type="DNASU" id="1487925"/>
<dbReference type="GeneID" id="1487925"/>
<dbReference type="KEGG" id="vg:1487925"/>
<dbReference type="Proteomes" id="UP000009295">
    <property type="component" value="Segment"/>
</dbReference>
<dbReference type="GO" id="GO:0044177">
    <property type="term" value="C:host cell Golgi apparatus"/>
    <property type="evidence" value="ECO:0007669"/>
    <property type="project" value="UniProtKB-SubCell"/>
</dbReference>
<dbReference type="GO" id="GO:0033644">
    <property type="term" value="C:host cell membrane"/>
    <property type="evidence" value="ECO:0007669"/>
    <property type="project" value="UniProtKB-SubCell"/>
</dbReference>
<dbReference type="GO" id="GO:0016020">
    <property type="term" value="C:membrane"/>
    <property type="evidence" value="ECO:0007669"/>
    <property type="project" value="UniProtKB-KW"/>
</dbReference>
<dbReference type="GO" id="GO:0019031">
    <property type="term" value="C:viral envelope"/>
    <property type="evidence" value="ECO:0007669"/>
    <property type="project" value="UniProtKB-KW"/>
</dbReference>
<dbReference type="GO" id="GO:0055036">
    <property type="term" value="C:virion membrane"/>
    <property type="evidence" value="ECO:0007669"/>
    <property type="project" value="UniProtKB-SubCell"/>
</dbReference>
<dbReference type="HAMAP" id="MF_04037">
    <property type="entry name" value="HSV_GN"/>
    <property type="match status" value="1"/>
</dbReference>
<dbReference type="InterPro" id="IPR005211">
    <property type="entry name" value="Herpes_glycoprotein_N_domain"/>
</dbReference>
<dbReference type="InterPro" id="IPR034707">
    <property type="entry name" value="HSV_GN"/>
</dbReference>
<dbReference type="Pfam" id="PF03554">
    <property type="entry name" value="Herpes_UL73"/>
    <property type="match status" value="1"/>
</dbReference>
<accession>Q06094</accession>
<reference key="1">
    <citation type="journal article" date="1992" name="DNA Seq.">
        <title>Infectivity determinants encoded in a conserved gene block of human herpesvirus-6.</title>
        <authorList>
            <person name="Gompels U.A."/>
            <person name="Carss A.L."/>
            <person name="Sun N."/>
            <person name="Arrand J.R."/>
        </authorList>
    </citation>
    <scope>NUCLEOTIDE SEQUENCE [GENOMIC DNA]</scope>
</reference>
<reference key="2">
    <citation type="journal article" date="1995" name="Virology">
        <title>The DNA sequence of human herpesvirus-6: structure, coding content, and genome evolution.</title>
        <authorList>
            <person name="Gompels U.A."/>
            <person name="Nicholas J."/>
            <person name="Lawrence G.L."/>
            <person name="Jones M."/>
            <person name="Thomson B.J."/>
            <person name="Martin M.E.D."/>
            <person name="Efstathiou S."/>
            <person name="Craxton M.A."/>
            <person name="Macaulay H.A."/>
        </authorList>
    </citation>
    <scope>NUCLEOTIDE SEQUENCE [LARGE SCALE GENOMIC DNA]</scope>
</reference>
<proteinExistence type="inferred from homology"/>
<organismHost>
    <name type="scientific">Homo sapiens</name>
    <name type="common">Human</name>
    <dbReference type="NCBI Taxonomy" id="9606"/>
</organismHost>
<organism>
    <name type="scientific">Human herpesvirus 6A (strain Uganda-1102)</name>
    <name type="common">HHV-6 variant A</name>
    <name type="synonym">Human B lymphotropic virus</name>
    <dbReference type="NCBI Taxonomy" id="10370"/>
    <lineage>
        <taxon>Viruses</taxon>
        <taxon>Duplodnaviria</taxon>
        <taxon>Heunggongvirae</taxon>
        <taxon>Peploviricota</taxon>
        <taxon>Herviviricetes</taxon>
        <taxon>Herpesvirales</taxon>
        <taxon>Orthoherpesviridae</taxon>
        <taxon>Betaherpesvirinae</taxon>
        <taxon>Roseolovirus</taxon>
        <taxon>Roseolovirus humanbeta6a</taxon>
        <taxon>Human betaherpesvirus 6A</taxon>
    </lineage>
</organism>
<name>GN_HHV6U</name>
<evidence type="ECO:0000255" key="1">
    <source>
        <dbReference type="HAMAP-Rule" id="MF_04037"/>
    </source>
</evidence>